<proteinExistence type="inferred from homology"/>
<gene>
    <name evidence="1" type="primary">tig</name>
    <name type="ordered locus">CLL_A2890</name>
</gene>
<organism>
    <name type="scientific">Clostridium botulinum (strain Eklund 17B / Type B)</name>
    <dbReference type="NCBI Taxonomy" id="935198"/>
    <lineage>
        <taxon>Bacteria</taxon>
        <taxon>Bacillati</taxon>
        <taxon>Bacillota</taxon>
        <taxon>Clostridia</taxon>
        <taxon>Eubacteriales</taxon>
        <taxon>Clostridiaceae</taxon>
        <taxon>Clostridium</taxon>
    </lineage>
</organism>
<keyword id="KW-0131">Cell cycle</keyword>
<keyword id="KW-0132">Cell division</keyword>
<keyword id="KW-0143">Chaperone</keyword>
<keyword id="KW-0963">Cytoplasm</keyword>
<keyword id="KW-0413">Isomerase</keyword>
<keyword id="KW-0697">Rotamase</keyword>
<comment type="function">
    <text evidence="1">Involved in protein export. Acts as a chaperone by maintaining the newly synthesized protein in an open conformation. Functions as a peptidyl-prolyl cis-trans isomerase.</text>
</comment>
<comment type="catalytic activity">
    <reaction evidence="1">
        <text>[protein]-peptidylproline (omega=180) = [protein]-peptidylproline (omega=0)</text>
        <dbReference type="Rhea" id="RHEA:16237"/>
        <dbReference type="Rhea" id="RHEA-COMP:10747"/>
        <dbReference type="Rhea" id="RHEA-COMP:10748"/>
        <dbReference type="ChEBI" id="CHEBI:83833"/>
        <dbReference type="ChEBI" id="CHEBI:83834"/>
        <dbReference type="EC" id="5.2.1.8"/>
    </reaction>
</comment>
<comment type="subcellular location">
    <subcellularLocation>
        <location>Cytoplasm</location>
    </subcellularLocation>
    <text evidence="1">About half TF is bound to the ribosome near the polypeptide exit tunnel while the other half is free in the cytoplasm.</text>
</comment>
<comment type="domain">
    <text evidence="1">Consists of 3 domains; the N-terminus binds the ribosome, the middle domain has PPIase activity, while the C-terminus has intrinsic chaperone activity on its own.</text>
</comment>
<comment type="similarity">
    <text evidence="1">Belongs to the FKBP-type PPIase family. Tig subfamily.</text>
</comment>
<name>TIG_CLOBB</name>
<reference key="1">
    <citation type="submission" date="2008-04" db="EMBL/GenBank/DDBJ databases">
        <title>Complete sequence of Clostridium botulinum strain Eklund.</title>
        <authorList>
            <person name="Brinkac L.M."/>
            <person name="Brown J.L."/>
            <person name="Bruce D."/>
            <person name="Detter C."/>
            <person name="Munk C."/>
            <person name="Smith L.A."/>
            <person name="Smith T.J."/>
            <person name="Sutton G."/>
            <person name="Brettin T.S."/>
        </authorList>
    </citation>
    <scope>NUCLEOTIDE SEQUENCE [LARGE SCALE GENOMIC DNA]</scope>
    <source>
        <strain>Eklund 17B / Type B</strain>
    </source>
</reference>
<dbReference type="EC" id="5.2.1.8" evidence="1"/>
<dbReference type="EMBL" id="CP001056">
    <property type="protein sequence ID" value="ACD23973.1"/>
    <property type="molecule type" value="Genomic_DNA"/>
</dbReference>
<dbReference type="SMR" id="B2TPC0"/>
<dbReference type="KEGG" id="cbk:CLL_A2890"/>
<dbReference type="HOGENOM" id="CLU_033058_3_2_9"/>
<dbReference type="Proteomes" id="UP000001195">
    <property type="component" value="Chromosome"/>
</dbReference>
<dbReference type="GO" id="GO:0005737">
    <property type="term" value="C:cytoplasm"/>
    <property type="evidence" value="ECO:0007669"/>
    <property type="project" value="UniProtKB-SubCell"/>
</dbReference>
<dbReference type="GO" id="GO:0003755">
    <property type="term" value="F:peptidyl-prolyl cis-trans isomerase activity"/>
    <property type="evidence" value="ECO:0007669"/>
    <property type="project" value="UniProtKB-UniRule"/>
</dbReference>
<dbReference type="GO" id="GO:0044183">
    <property type="term" value="F:protein folding chaperone"/>
    <property type="evidence" value="ECO:0007669"/>
    <property type="project" value="TreeGrafter"/>
</dbReference>
<dbReference type="GO" id="GO:0043022">
    <property type="term" value="F:ribosome binding"/>
    <property type="evidence" value="ECO:0007669"/>
    <property type="project" value="TreeGrafter"/>
</dbReference>
<dbReference type="GO" id="GO:0051083">
    <property type="term" value="P:'de novo' cotranslational protein folding"/>
    <property type="evidence" value="ECO:0007669"/>
    <property type="project" value="TreeGrafter"/>
</dbReference>
<dbReference type="GO" id="GO:0051301">
    <property type="term" value="P:cell division"/>
    <property type="evidence" value="ECO:0007669"/>
    <property type="project" value="UniProtKB-KW"/>
</dbReference>
<dbReference type="GO" id="GO:0061077">
    <property type="term" value="P:chaperone-mediated protein folding"/>
    <property type="evidence" value="ECO:0007669"/>
    <property type="project" value="TreeGrafter"/>
</dbReference>
<dbReference type="GO" id="GO:0015031">
    <property type="term" value="P:protein transport"/>
    <property type="evidence" value="ECO:0007669"/>
    <property type="project" value="UniProtKB-UniRule"/>
</dbReference>
<dbReference type="GO" id="GO:0043335">
    <property type="term" value="P:protein unfolding"/>
    <property type="evidence" value="ECO:0007669"/>
    <property type="project" value="TreeGrafter"/>
</dbReference>
<dbReference type="FunFam" id="3.10.50.40:FF:000001">
    <property type="entry name" value="Trigger factor"/>
    <property type="match status" value="1"/>
</dbReference>
<dbReference type="Gene3D" id="3.10.50.40">
    <property type="match status" value="1"/>
</dbReference>
<dbReference type="Gene3D" id="3.30.70.1050">
    <property type="entry name" value="Trigger factor ribosome-binding domain"/>
    <property type="match status" value="1"/>
</dbReference>
<dbReference type="Gene3D" id="1.10.3120.10">
    <property type="entry name" value="Trigger factor, C-terminal domain"/>
    <property type="match status" value="1"/>
</dbReference>
<dbReference type="HAMAP" id="MF_00303">
    <property type="entry name" value="Trigger_factor_Tig"/>
    <property type="match status" value="1"/>
</dbReference>
<dbReference type="InterPro" id="IPR046357">
    <property type="entry name" value="PPIase_dom_sf"/>
</dbReference>
<dbReference type="InterPro" id="IPR001179">
    <property type="entry name" value="PPIase_FKBP_dom"/>
</dbReference>
<dbReference type="InterPro" id="IPR005215">
    <property type="entry name" value="Trig_fac"/>
</dbReference>
<dbReference type="InterPro" id="IPR008880">
    <property type="entry name" value="Trigger_fac_C"/>
</dbReference>
<dbReference type="InterPro" id="IPR037041">
    <property type="entry name" value="Trigger_fac_C_sf"/>
</dbReference>
<dbReference type="InterPro" id="IPR008881">
    <property type="entry name" value="Trigger_fac_ribosome-bd_bac"/>
</dbReference>
<dbReference type="InterPro" id="IPR036611">
    <property type="entry name" value="Trigger_fac_ribosome-bd_sf"/>
</dbReference>
<dbReference type="InterPro" id="IPR027304">
    <property type="entry name" value="Trigger_fact/SurA_dom_sf"/>
</dbReference>
<dbReference type="NCBIfam" id="TIGR00115">
    <property type="entry name" value="tig"/>
    <property type="match status" value="1"/>
</dbReference>
<dbReference type="PANTHER" id="PTHR30560">
    <property type="entry name" value="TRIGGER FACTOR CHAPERONE AND PEPTIDYL-PROLYL CIS/TRANS ISOMERASE"/>
    <property type="match status" value="1"/>
</dbReference>
<dbReference type="PANTHER" id="PTHR30560:SF3">
    <property type="entry name" value="TRIGGER FACTOR-LIKE PROTEIN TIG, CHLOROPLASTIC"/>
    <property type="match status" value="1"/>
</dbReference>
<dbReference type="Pfam" id="PF00254">
    <property type="entry name" value="FKBP_C"/>
    <property type="match status" value="1"/>
</dbReference>
<dbReference type="Pfam" id="PF05698">
    <property type="entry name" value="Trigger_C"/>
    <property type="match status" value="1"/>
</dbReference>
<dbReference type="Pfam" id="PF05697">
    <property type="entry name" value="Trigger_N"/>
    <property type="match status" value="1"/>
</dbReference>
<dbReference type="PIRSF" id="PIRSF003095">
    <property type="entry name" value="Trigger_factor"/>
    <property type="match status" value="1"/>
</dbReference>
<dbReference type="SUPFAM" id="SSF54534">
    <property type="entry name" value="FKBP-like"/>
    <property type="match status" value="1"/>
</dbReference>
<dbReference type="SUPFAM" id="SSF109998">
    <property type="entry name" value="Triger factor/SurA peptide-binding domain-like"/>
    <property type="match status" value="1"/>
</dbReference>
<dbReference type="SUPFAM" id="SSF102735">
    <property type="entry name" value="Trigger factor ribosome-binding domain"/>
    <property type="match status" value="1"/>
</dbReference>
<dbReference type="PROSITE" id="PS50059">
    <property type="entry name" value="FKBP_PPIASE"/>
    <property type="match status" value="1"/>
</dbReference>
<evidence type="ECO:0000255" key="1">
    <source>
        <dbReference type="HAMAP-Rule" id="MF_00303"/>
    </source>
</evidence>
<feature type="chain" id="PRO_1000115521" description="Trigger factor">
    <location>
        <begin position="1"/>
        <end position="427"/>
    </location>
</feature>
<feature type="domain" description="PPIase FKBP-type" evidence="1">
    <location>
        <begin position="163"/>
        <end position="248"/>
    </location>
</feature>
<sequence length="427" mass="48429">MEAKVEKIETNVVKLEIKVEAEKFDAALTKAYNKNKGKYNVPGFRKGKVPMAILKKMYGIEIFYDDAVNIAIDESYNEALKAEDIRPVDYPKVDIVEIGEGKELVYTATVTTYPEVEIGEYKGLDIKKPSYEVSEEEVEKQVKEMQSKNARIETKEEGTIADGNIAIIDFKGFVDGEAFEGGEGTDYPLEIGSGTFIDNFEEQLIGLAIGDKKEVNVTFPENYGKEELNAKPAMFEVTVKGIKAKELPELDDEFAKEVSEFDTLAELKENIKKRLEESNDERAEREFEEAVITSIIETSKIDLPEVMLTKEIDSMMKDLESRLQYQGLSLDQYMEFTGNTMEKMREFMKENAERKVKADIILESVAKAEDVKATDEQLNERALELGRMYGPKDPKKMANILLKAQKGMIEKDIIIENTLKLIKESCK</sequence>
<accession>B2TPC0</accession>
<protein>
    <recommendedName>
        <fullName evidence="1">Trigger factor</fullName>
        <shortName evidence="1">TF</shortName>
        <ecNumber evidence="1">5.2.1.8</ecNumber>
    </recommendedName>
    <alternativeName>
        <fullName evidence="1">PPIase</fullName>
    </alternativeName>
</protein>